<dbReference type="EMBL" id="CP000075">
    <property type="protein sequence ID" value="AAY39224.1"/>
    <property type="molecule type" value="Genomic_DNA"/>
</dbReference>
<dbReference type="RefSeq" id="WP_003395180.1">
    <property type="nucleotide sequence ID" value="NC_007005.1"/>
</dbReference>
<dbReference type="RefSeq" id="YP_237262.1">
    <property type="nucleotide sequence ID" value="NC_007005.1"/>
</dbReference>
<dbReference type="SMR" id="Q4ZNP8"/>
<dbReference type="STRING" id="205918.Psyr_4194"/>
<dbReference type="GeneID" id="77280058"/>
<dbReference type="KEGG" id="psb:Psyr_4194"/>
<dbReference type="PATRIC" id="fig|205918.7.peg.4321"/>
<dbReference type="eggNOG" id="COG0484">
    <property type="taxonomic scope" value="Bacteria"/>
</dbReference>
<dbReference type="HOGENOM" id="CLU_017633_0_7_6"/>
<dbReference type="OrthoDB" id="9779889at2"/>
<dbReference type="Proteomes" id="UP000000426">
    <property type="component" value="Chromosome"/>
</dbReference>
<dbReference type="GO" id="GO:0005737">
    <property type="term" value="C:cytoplasm"/>
    <property type="evidence" value="ECO:0007669"/>
    <property type="project" value="UniProtKB-SubCell"/>
</dbReference>
<dbReference type="GO" id="GO:0005524">
    <property type="term" value="F:ATP binding"/>
    <property type="evidence" value="ECO:0007669"/>
    <property type="project" value="InterPro"/>
</dbReference>
<dbReference type="GO" id="GO:0031072">
    <property type="term" value="F:heat shock protein binding"/>
    <property type="evidence" value="ECO:0007669"/>
    <property type="project" value="InterPro"/>
</dbReference>
<dbReference type="GO" id="GO:0051082">
    <property type="term" value="F:unfolded protein binding"/>
    <property type="evidence" value="ECO:0007669"/>
    <property type="project" value="UniProtKB-UniRule"/>
</dbReference>
<dbReference type="GO" id="GO:0008270">
    <property type="term" value="F:zinc ion binding"/>
    <property type="evidence" value="ECO:0007669"/>
    <property type="project" value="UniProtKB-UniRule"/>
</dbReference>
<dbReference type="GO" id="GO:0051085">
    <property type="term" value="P:chaperone cofactor-dependent protein refolding"/>
    <property type="evidence" value="ECO:0007669"/>
    <property type="project" value="TreeGrafter"/>
</dbReference>
<dbReference type="GO" id="GO:0006260">
    <property type="term" value="P:DNA replication"/>
    <property type="evidence" value="ECO:0007669"/>
    <property type="project" value="UniProtKB-KW"/>
</dbReference>
<dbReference type="GO" id="GO:0042026">
    <property type="term" value="P:protein refolding"/>
    <property type="evidence" value="ECO:0007669"/>
    <property type="project" value="TreeGrafter"/>
</dbReference>
<dbReference type="GO" id="GO:0009408">
    <property type="term" value="P:response to heat"/>
    <property type="evidence" value="ECO:0007669"/>
    <property type="project" value="InterPro"/>
</dbReference>
<dbReference type="CDD" id="cd06257">
    <property type="entry name" value="DnaJ"/>
    <property type="match status" value="1"/>
</dbReference>
<dbReference type="CDD" id="cd10747">
    <property type="entry name" value="DnaJ_C"/>
    <property type="match status" value="1"/>
</dbReference>
<dbReference type="CDD" id="cd10719">
    <property type="entry name" value="DnaJ_zf"/>
    <property type="match status" value="1"/>
</dbReference>
<dbReference type="FunFam" id="1.10.287.110:FF:000051">
    <property type="entry name" value="Molecular chaperone DnaJ"/>
    <property type="match status" value="1"/>
</dbReference>
<dbReference type="FunFam" id="2.10.230.10:FF:000002">
    <property type="entry name" value="Molecular chaperone DnaJ"/>
    <property type="match status" value="1"/>
</dbReference>
<dbReference type="FunFam" id="2.60.260.20:FF:000004">
    <property type="entry name" value="Molecular chaperone DnaJ"/>
    <property type="match status" value="1"/>
</dbReference>
<dbReference type="Gene3D" id="1.10.287.110">
    <property type="entry name" value="DnaJ domain"/>
    <property type="match status" value="1"/>
</dbReference>
<dbReference type="Gene3D" id="2.10.230.10">
    <property type="entry name" value="Heat shock protein DnaJ, cysteine-rich domain"/>
    <property type="match status" value="1"/>
</dbReference>
<dbReference type="Gene3D" id="2.60.260.20">
    <property type="entry name" value="Urease metallochaperone UreE, N-terminal domain"/>
    <property type="match status" value="2"/>
</dbReference>
<dbReference type="HAMAP" id="MF_01152">
    <property type="entry name" value="DnaJ"/>
    <property type="match status" value="1"/>
</dbReference>
<dbReference type="InterPro" id="IPR012724">
    <property type="entry name" value="DnaJ"/>
</dbReference>
<dbReference type="InterPro" id="IPR002939">
    <property type="entry name" value="DnaJ_C"/>
</dbReference>
<dbReference type="InterPro" id="IPR001623">
    <property type="entry name" value="DnaJ_domain"/>
</dbReference>
<dbReference type="InterPro" id="IPR018253">
    <property type="entry name" value="DnaJ_domain_CS"/>
</dbReference>
<dbReference type="InterPro" id="IPR008971">
    <property type="entry name" value="HSP40/DnaJ_pept-bd"/>
</dbReference>
<dbReference type="InterPro" id="IPR001305">
    <property type="entry name" value="HSP_DnaJ_Cys-rich_dom"/>
</dbReference>
<dbReference type="InterPro" id="IPR036410">
    <property type="entry name" value="HSP_DnaJ_Cys-rich_dom_sf"/>
</dbReference>
<dbReference type="InterPro" id="IPR036869">
    <property type="entry name" value="J_dom_sf"/>
</dbReference>
<dbReference type="NCBIfam" id="TIGR02349">
    <property type="entry name" value="DnaJ_bact"/>
    <property type="match status" value="1"/>
</dbReference>
<dbReference type="NCBIfam" id="NF008035">
    <property type="entry name" value="PRK10767.1"/>
    <property type="match status" value="1"/>
</dbReference>
<dbReference type="PANTHER" id="PTHR43096:SF48">
    <property type="entry name" value="CHAPERONE PROTEIN DNAJ"/>
    <property type="match status" value="1"/>
</dbReference>
<dbReference type="PANTHER" id="PTHR43096">
    <property type="entry name" value="DNAJ HOMOLOG 1, MITOCHONDRIAL-RELATED"/>
    <property type="match status" value="1"/>
</dbReference>
<dbReference type="Pfam" id="PF00226">
    <property type="entry name" value="DnaJ"/>
    <property type="match status" value="1"/>
</dbReference>
<dbReference type="Pfam" id="PF01556">
    <property type="entry name" value="DnaJ_C"/>
    <property type="match status" value="1"/>
</dbReference>
<dbReference type="Pfam" id="PF00684">
    <property type="entry name" value="DnaJ_CXXCXGXG"/>
    <property type="match status" value="1"/>
</dbReference>
<dbReference type="PRINTS" id="PR00625">
    <property type="entry name" value="JDOMAIN"/>
</dbReference>
<dbReference type="SMART" id="SM00271">
    <property type="entry name" value="DnaJ"/>
    <property type="match status" value="1"/>
</dbReference>
<dbReference type="SUPFAM" id="SSF46565">
    <property type="entry name" value="Chaperone J-domain"/>
    <property type="match status" value="1"/>
</dbReference>
<dbReference type="SUPFAM" id="SSF57938">
    <property type="entry name" value="DnaJ/Hsp40 cysteine-rich domain"/>
    <property type="match status" value="1"/>
</dbReference>
<dbReference type="SUPFAM" id="SSF49493">
    <property type="entry name" value="HSP40/DnaJ peptide-binding domain"/>
    <property type="match status" value="2"/>
</dbReference>
<dbReference type="PROSITE" id="PS00636">
    <property type="entry name" value="DNAJ_1"/>
    <property type="match status" value="1"/>
</dbReference>
<dbReference type="PROSITE" id="PS50076">
    <property type="entry name" value="DNAJ_2"/>
    <property type="match status" value="1"/>
</dbReference>
<dbReference type="PROSITE" id="PS51188">
    <property type="entry name" value="ZF_CR"/>
    <property type="match status" value="1"/>
</dbReference>
<feature type="chain" id="PRO_1000085256" description="Chaperone protein DnaJ">
    <location>
        <begin position="1"/>
        <end position="380"/>
    </location>
</feature>
<feature type="domain" description="J" evidence="1">
    <location>
        <begin position="5"/>
        <end position="70"/>
    </location>
</feature>
<feature type="repeat" description="CXXCXGXG motif">
    <location>
        <begin position="152"/>
        <end position="159"/>
    </location>
</feature>
<feature type="repeat" description="CXXCXGXG motif">
    <location>
        <begin position="169"/>
        <end position="176"/>
    </location>
</feature>
<feature type="repeat" description="CXXCXGXG motif">
    <location>
        <begin position="191"/>
        <end position="198"/>
    </location>
</feature>
<feature type="repeat" description="CXXCXGXG motif">
    <location>
        <begin position="205"/>
        <end position="212"/>
    </location>
</feature>
<feature type="zinc finger region" description="CR-type" evidence="1">
    <location>
        <begin position="139"/>
        <end position="217"/>
    </location>
</feature>
<feature type="region of interest" description="Disordered" evidence="2">
    <location>
        <begin position="224"/>
        <end position="245"/>
    </location>
</feature>
<feature type="binding site" evidence="1">
    <location>
        <position position="152"/>
    </location>
    <ligand>
        <name>Zn(2+)</name>
        <dbReference type="ChEBI" id="CHEBI:29105"/>
        <label>1</label>
    </ligand>
</feature>
<feature type="binding site" evidence="1">
    <location>
        <position position="155"/>
    </location>
    <ligand>
        <name>Zn(2+)</name>
        <dbReference type="ChEBI" id="CHEBI:29105"/>
        <label>1</label>
    </ligand>
</feature>
<feature type="binding site" evidence="1">
    <location>
        <position position="169"/>
    </location>
    <ligand>
        <name>Zn(2+)</name>
        <dbReference type="ChEBI" id="CHEBI:29105"/>
        <label>2</label>
    </ligand>
</feature>
<feature type="binding site" evidence="1">
    <location>
        <position position="172"/>
    </location>
    <ligand>
        <name>Zn(2+)</name>
        <dbReference type="ChEBI" id="CHEBI:29105"/>
        <label>2</label>
    </ligand>
</feature>
<feature type="binding site" evidence="1">
    <location>
        <position position="191"/>
    </location>
    <ligand>
        <name>Zn(2+)</name>
        <dbReference type="ChEBI" id="CHEBI:29105"/>
        <label>2</label>
    </ligand>
</feature>
<feature type="binding site" evidence="1">
    <location>
        <position position="194"/>
    </location>
    <ligand>
        <name>Zn(2+)</name>
        <dbReference type="ChEBI" id="CHEBI:29105"/>
        <label>2</label>
    </ligand>
</feature>
<feature type="binding site" evidence="1">
    <location>
        <position position="205"/>
    </location>
    <ligand>
        <name>Zn(2+)</name>
        <dbReference type="ChEBI" id="CHEBI:29105"/>
        <label>1</label>
    </ligand>
</feature>
<feature type="binding site" evidence="1">
    <location>
        <position position="208"/>
    </location>
    <ligand>
        <name>Zn(2+)</name>
        <dbReference type="ChEBI" id="CHEBI:29105"/>
        <label>1</label>
    </ligand>
</feature>
<protein>
    <recommendedName>
        <fullName evidence="1">Chaperone protein DnaJ</fullName>
    </recommendedName>
</protein>
<reference key="1">
    <citation type="journal article" date="2005" name="Proc. Natl. Acad. Sci. U.S.A.">
        <title>Comparison of the complete genome sequences of Pseudomonas syringae pv. syringae B728a and pv. tomato DC3000.</title>
        <authorList>
            <person name="Feil H."/>
            <person name="Feil W.S."/>
            <person name="Chain P."/>
            <person name="Larimer F."/>
            <person name="Dibartolo G."/>
            <person name="Copeland A."/>
            <person name="Lykidis A."/>
            <person name="Trong S."/>
            <person name="Nolan M."/>
            <person name="Goltsman E."/>
            <person name="Thiel J."/>
            <person name="Malfatti S."/>
            <person name="Loper J.E."/>
            <person name="Lapidus A."/>
            <person name="Detter J.C."/>
            <person name="Land M."/>
            <person name="Richardson P.M."/>
            <person name="Kyrpides N.C."/>
            <person name="Ivanova N."/>
            <person name="Lindow S.E."/>
        </authorList>
    </citation>
    <scope>NUCLEOTIDE SEQUENCE [LARGE SCALE GENOMIC DNA]</scope>
    <source>
        <strain>B728a</strain>
    </source>
</reference>
<name>DNAJ_PSEU2</name>
<comment type="function">
    <text evidence="1">Participates actively in the response to hyperosmotic and heat shock by preventing the aggregation of stress-denatured proteins and by disaggregating proteins, also in an autonomous, DnaK-independent fashion. Unfolded proteins bind initially to DnaJ; upon interaction with the DnaJ-bound protein, DnaK hydrolyzes its bound ATP, resulting in the formation of a stable complex. GrpE releases ADP from DnaK; ATP binding to DnaK triggers the release of the substrate protein, thus completing the reaction cycle. Several rounds of ATP-dependent interactions between DnaJ, DnaK and GrpE are required for fully efficient folding. Also involved, together with DnaK and GrpE, in the DNA replication of plasmids through activation of initiation proteins.</text>
</comment>
<comment type="cofactor">
    <cofactor evidence="1">
        <name>Zn(2+)</name>
        <dbReference type="ChEBI" id="CHEBI:29105"/>
    </cofactor>
    <text evidence="1">Binds 2 Zn(2+) ions per monomer.</text>
</comment>
<comment type="subunit">
    <text evidence="1">Homodimer.</text>
</comment>
<comment type="subcellular location">
    <subcellularLocation>
        <location evidence="1">Cytoplasm</location>
    </subcellularLocation>
</comment>
<comment type="domain">
    <text evidence="1">The J domain is necessary and sufficient to stimulate DnaK ATPase activity. Zinc center 1 plays an important role in the autonomous, DnaK-independent chaperone activity of DnaJ. Zinc center 2 is essential for interaction with DnaK and for DnaJ activity.</text>
</comment>
<comment type="similarity">
    <text evidence="1">Belongs to the DnaJ family.</text>
</comment>
<proteinExistence type="inferred from homology"/>
<organism>
    <name type="scientific">Pseudomonas syringae pv. syringae (strain B728a)</name>
    <dbReference type="NCBI Taxonomy" id="205918"/>
    <lineage>
        <taxon>Bacteria</taxon>
        <taxon>Pseudomonadati</taxon>
        <taxon>Pseudomonadota</taxon>
        <taxon>Gammaproteobacteria</taxon>
        <taxon>Pseudomonadales</taxon>
        <taxon>Pseudomonadaceae</taxon>
        <taxon>Pseudomonas</taxon>
        <taxon>Pseudomonas syringae</taxon>
    </lineage>
</organism>
<sequence length="380" mass="40503">MAKRDYYEVLGVERGSSEADLKKAYRRLAMKHHPDRNPDDKASEELFKEANEAYEVLSDASKRAAYDQYGHAGVDPSMGGGGGFGGGAGGANFSDIFGDVFSDFFGGGRAGGGGGRGGAQRGSDLRYTLELNLEEAVRGTNVNIRVPTLVNCKPCDGSGAKKGSSPVTCPTCGGIGQVRMQQGFFSVQQTCPRCHGHGKIISDPCDSCHGEGRVEESKTLSVKVPPGVDTGDRIRLSGEGEAGTQGGPTGDLYVVINVREHAIFQRDGKHLFCEVPISFTDAALGGELEVPTLDGRVKLKIPEGTQTGKQFRLRGKGVAPVRGGGAGDLMCRVAVETPVNLSKRQRELLEEFRTSLENDESHSPKASGWFEGVKRFFGDL</sequence>
<accession>Q4ZNP8</accession>
<evidence type="ECO:0000255" key="1">
    <source>
        <dbReference type="HAMAP-Rule" id="MF_01152"/>
    </source>
</evidence>
<evidence type="ECO:0000256" key="2">
    <source>
        <dbReference type="SAM" id="MobiDB-lite"/>
    </source>
</evidence>
<gene>
    <name evidence="1" type="primary">dnaJ</name>
    <name type="ordered locus">Psyr_4194</name>
</gene>
<keyword id="KW-0143">Chaperone</keyword>
<keyword id="KW-0963">Cytoplasm</keyword>
<keyword id="KW-0235">DNA replication</keyword>
<keyword id="KW-0479">Metal-binding</keyword>
<keyword id="KW-0677">Repeat</keyword>
<keyword id="KW-0346">Stress response</keyword>
<keyword id="KW-0862">Zinc</keyword>
<keyword id="KW-0863">Zinc-finger</keyword>